<feature type="chain" id="PRO_0000303465" description="tRNA N6-adenosine threonylcarbamoyltransferase">
    <location>
        <begin position="1"/>
        <end position="344"/>
    </location>
</feature>
<feature type="binding site" evidence="1">
    <location>
        <position position="111"/>
    </location>
    <ligand>
        <name>Fe cation</name>
        <dbReference type="ChEBI" id="CHEBI:24875"/>
    </ligand>
</feature>
<feature type="binding site" evidence="1">
    <location>
        <position position="115"/>
    </location>
    <ligand>
        <name>Fe cation</name>
        <dbReference type="ChEBI" id="CHEBI:24875"/>
    </ligand>
</feature>
<feature type="binding site" evidence="1">
    <location>
        <begin position="133"/>
        <end position="137"/>
    </location>
    <ligand>
        <name>substrate</name>
    </ligand>
</feature>
<feature type="binding site" evidence="1">
    <location>
        <position position="166"/>
    </location>
    <ligand>
        <name>substrate</name>
    </ligand>
</feature>
<feature type="binding site" evidence="1">
    <location>
        <position position="179"/>
    </location>
    <ligand>
        <name>substrate</name>
    </ligand>
</feature>
<feature type="binding site" evidence="1">
    <location>
        <position position="283"/>
    </location>
    <ligand>
        <name>substrate</name>
    </ligand>
</feature>
<feature type="binding site" evidence="1">
    <location>
        <position position="311"/>
    </location>
    <ligand>
        <name>Fe cation</name>
        <dbReference type="ChEBI" id="CHEBI:24875"/>
    </ligand>
</feature>
<gene>
    <name evidence="1" type="primary">tsaD</name>
    <name type="synonym">gcp</name>
    <name type="ordered locus">OTBS_1219</name>
</gene>
<organism>
    <name type="scientific">Orientia tsutsugamushi (strain Boryong)</name>
    <name type="common">Rickettsia tsutsugamushi</name>
    <dbReference type="NCBI Taxonomy" id="357244"/>
    <lineage>
        <taxon>Bacteria</taxon>
        <taxon>Pseudomonadati</taxon>
        <taxon>Pseudomonadota</taxon>
        <taxon>Alphaproteobacteria</taxon>
        <taxon>Rickettsiales</taxon>
        <taxon>Rickettsiaceae</taxon>
        <taxon>Rickettsieae</taxon>
        <taxon>Orientia</taxon>
    </lineage>
</organism>
<name>TSAD_ORITB</name>
<accession>A5CE49</accession>
<sequence length="344" mass="37240">MNVIGIESSCDDTAIAIVNSNREIIANVVISQYTEHLPYSGVVPEIAARAHLKNLQYAMKETLNQAKINFTDIDVIAATSGPGLIGGIIVGSVFGQAIACALGKDFIAVNHLEGHILAVRLNENISFPYLVLLVSGGHCQFIAVLGVGKYKILGQTIDDAVGEAFDKTARLLKLGYPGGPIIEKLASKGDPHKYSLPLSMTKKSGCDLSFSGLKTAVKQLIFSIESLSEKVICDICASFQYTVVQILLCRSINAIKLFESYCSNNFKINRKNYFVISGGVAANQYLRQEIFNLANTYGYCGVAPPSNLCTDNAAMIAWAGIERLNANLFSSNFVPRAKWSVEEL</sequence>
<protein>
    <recommendedName>
        <fullName evidence="1">tRNA N6-adenosine threonylcarbamoyltransferase</fullName>
        <ecNumber evidence="1">2.3.1.234</ecNumber>
    </recommendedName>
    <alternativeName>
        <fullName evidence="1">N6-L-threonylcarbamoyladenine synthase</fullName>
        <shortName evidence="1">t(6)A synthase</shortName>
    </alternativeName>
    <alternativeName>
        <fullName evidence="1">t(6)A37 threonylcarbamoyladenosine biosynthesis protein TsaD</fullName>
    </alternativeName>
    <alternativeName>
        <fullName evidence="1">tRNA threonylcarbamoyladenosine biosynthesis protein TsaD</fullName>
    </alternativeName>
</protein>
<reference key="1">
    <citation type="journal article" date="2007" name="Proc. Natl. Acad. Sci. U.S.A.">
        <title>The Orientia tsutsugamushi genome reveals massive proliferation of conjugative type IV secretion system and host-cell interaction genes.</title>
        <authorList>
            <person name="Cho N.-H."/>
            <person name="Kim H.-R."/>
            <person name="Lee J.-H."/>
            <person name="Kim S.-Y."/>
            <person name="Kim J."/>
            <person name="Cha S."/>
            <person name="Kim S.-Y."/>
            <person name="Darby A.C."/>
            <person name="Fuxelius H.-H."/>
            <person name="Yin J."/>
            <person name="Kim J.H."/>
            <person name="Kim J."/>
            <person name="Lee S.J."/>
            <person name="Koh Y.-S."/>
            <person name="Jang W.-J."/>
            <person name="Park K.-H."/>
            <person name="Andersson S.G.E."/>
            <person name="Choi M.-S."/>
            <person name="Kim I.-S."/>
        </authorList>
    </citation>
    <scope>NUCLEOTIDE SEQUENCE [LARGE SCALE GENOMIC DNA]</scope>
    <source>
        <strain>Boryong</strain>
    </source>
</reference>
<dbReference type="EC" id="2.3.1.234" evidence="1"/>
<dbReference type="EMBL" id="AM494475">
    <property type="protein sequence ID" value="CAM80285.1"/>
    <property type="molecule type" value="Genomic_DNA"/>
</dbReference>
<dbReference type="RefSeq" id="WP_011944819.1">
    <property type="nucleotide sequence ID" value="NC_009488.1"/>
</dbReference>
<dbReference type="SMR" id="A5CE49"/>
<dbReference type="KEGG" id="ots:OTBS_1219"/>
<dbReference type="eggNOG" id="COG0533">
    <property type="taxonomic scope" value="Bacteria"/>
</dbReference>
<dbReference type="HOGENOM" id="CLU_023208_0_2_5"/>
<dbReference type="Proteomes" id="UP000001565">
    <property type="component" value="Chromosome"/>
</dbReference>
<dbReference type="GO" id="GO:0005737">
    <property type="term" value="C:cytoplasm"/>
    <property type="evidence" value="ECO:0007669"/>
    <property type="project" value="UniProtKB-SubCell"/>
</dbReference>
<dbReference type="GO" id="GO:0005506">
    <property type="term" value="F:iron ion binding"/>
    <property type="evidence" value="ECO:0007669"/>
    <property type="project" value="UniProtKB-UniRule"/>
</dbReference>
<dbReference type="GO" id="GO:0061711">
    <property type="term" value="F:N(6)-L-threonylcarbamoyladenine synthase activity"/>
    <property type="evidence" value="ECO:0007669"/>
    <property type="project" value="UniProtKB-EC"/>
</dbReference>
<dbReference type="GO" id="GO:0002949">
    <property type="term" value="P:tRNA threonylcarbamoyladenosine modification"/>
    <property type="evidence" value="ECO:0007669"/>
    <property type="project" value="UniProtKB-UniRule"/>
</dbReference>
<dbReference type="CDD" id="cd24133">
    <property type="entry name" value="ASKHA_NBD_TsaD_bac"/>
    <property type="match status" value="1"/>
</dbReference>
<dbReference type="FunFam" id="3.30.420.40:FF:000012">
    <property type="entry name" value="tRNA N6-adenosine threonylcarbamoyltransferase"/>
    <property type="match status" value="1"/>
</dbReference>
<dbReference type="Gene3D" id="3.30.420.40">
    <property type="match status" value="2"/>
</dbReference>
<dbReference type="HAMAP" id="MF_01445">
    <property type="entry name" value="TsaD"/>
    <property type="match status" value="1"/>
</dbReference>
<dbReference type="InterPro" id="IPR043129">
    <property type="entry name" value="ATPase_NBD"/>
</dbReference>
<dbReference type="InterPro" id="IPR000905">
    <property type="entry name" value="Gcp-like_dom"/>
</dbReference>
<dbReference type="InterPro" id="IPR017861">
    <property type="entry name" value="KAE1/TsaD"/>
</dbReference>
<dbReference type="InterPro" id="IPR022450">
    <property type="entry name" value="TsaD"/>
</dbReference>
<dbReference type="NCBIfam" id="TIGR00329">
    <property type="entry name" value="gcp_kae1"/>
    <property type="match status" value="1"/>
</dbReference>
<dbReference type="NCBIfam" id="TIGR03723">
    <property type="entry name" value="T6A_TsaD_YgjD"/>
    <property type="match status" value="1"/>
</dbReference>
<dbReference type="PANTHER" id="PTHR11735">
    <property type="entry name" value="TRNA N6-ADENOSINE THREONYLCARBAMOYLTRANSFERASE"/>
    <property type="match status" value="1"/>
</dbReference>
<dbReference type="PANTHER" id="PTHR11735:SF6">
    <property type="entry name" value="TRNA N6-ADENOSINE THREONYLCARBAMOYLTRANSFERASE, MITOCHONDRIAL"/>
    <property type="match status" value="1"/>
</dbReference>
<dbReference type="Pfam" id="PF00814">
    <property type="entry name" value="TsaD"/>
    <property type="match status" value="1"/>
</dbReference>
<dbReference type="PRINTS" id="PR00789">
    <property type="entry name" value="OSIALOPTASE"/>
</dbReference>
<dbReference type="SUPFAM" id="SSF53067">
    <property type="entry name" value="Actin-like ATPase domain"/>
    <property type="match status" value="2"/>
</dbReference>
<keyword id="KW-0012">Acyltransferase</keyword>
<keyword id="KW-0963">Cytoplasm</keyword>
<keyword id="KW-0408">Iron</keyword>
<keyword id="KW-0479">Metal-binding</keyword>
<keyword id="KW-1185">Reference proteome</keyword>
<keyword id="KW-0808">Transferase</keyword>
<keyword id="KW-0819">tRNA processing</keyword>
<evidence type="ECO:0000255" key="1">
    <source>
        <dbReference type="HAMAP-Rule" id="MF_01445"/>
    </source>
</evidence>
<proteinExistence type="inferred from homology"/>
<comment type="function">
    <text evidence="1">Required for the formation of a threonylcarbamoyl group on adenosine at position 37 (t(6)A37) in tRNAs that read codons beginning with adenine. Is involved in the transfer of the threonylcarbamoyl moiety of threonylcarbamoyl-AMP (TC-AMP) to the N6 group of A37, together with TsaE and TsaB. TsaD likely plays a direct catalytic role in this reaction.</text>
</comment>
<comment type="catalytic activity">
    <reaction evidence="1">
        <text>L-threonylcarbamoyladenylate + adenosine(37) in tRNA = N(6)-L-threonylcarbamoyladenosine(37) in tRNA + AMP + H(+)</text>
        <dbReference type="Rhea" id="RHEA:37059"/>
        <dbReference type="Rhea" id="RHEA-COMP:10162"/>
        <dbReference type="Rhea" id="RHEA-COMP:10163"/>
        <dbReference type="ChEBI" id="CHEBI:15378"/>
        <dbReference type="ChEBI" id="CHEBI:73682"/>
        <dbReference type="ChEBI" id="CHEBI:74411"/>
        <dbReference type="ChEBI" id="CHEBI:74418"/>
        <dbReference type="ChEBI" id="CHEBI:456215"/>
        <dbReference type="EC" id="2.3.1.234"/>
    </reaction>
</comment>
<comment type="cofactor">
    <cofactor evidence="1">
        <name>Fe(2+)</name>
        <dbReference type="ChEBI" id="CHEBI:29033"/>
    </cofactor>
    <text evidence="1">Binds 1 Fe(2+) ion per subunit.</text>
</comment>
<comment type="subcellular location">
    <subcellularLocation>
        <location evidence="1">Cytoplasm</location>
    </subcellularLocation>
</comment>
<comment type="similarity">
    <text evidence="1">Belongs to the KAE1 / TsaD family.</text>
</comment>